<protein>
    <recommendedName>
        <fullName>5'-AMP-activated protein kinase catalytic subunit alpha-2</fullName>
        <shortName>AMPK subunit alpha-2</shortName>
        <ecNumber>2.7.11.1</ecNumber>
    </recommendedName>
</protein>
<organism>
    <name type="scientific">Caenorhabditis elegans</name>
    <dbReference type="NCBI Taxonomy" id="6239"/>
    <lineage>
        <taxon>Eukaryota</taxon>
        <taxon>Metazoa</taxon>
        <taxon>Ecdysozoa</taxon>
        <taxon>Nematoda</taxon>
        <taxon>Chromadorea</taxon>
        <taxon>Rhabditida</taxon>
        <taxon>Rhabditina</taxon>
        <taxon>Rhabditomorpha</taxon>
        <taxon>Rhabditoidea</taxon>
        <taxon>Rhabditidae</taxon>
        <taxon>Peloderinae</taxon>
        <taxon>Caenorhabditis</taxon>
    </lineage>
</organism>
<keyword id="KW-0025">Alternative splicing</keyword>
<keyword id="KW-0067">ATP-binding</keyword>
<keyword id="KW-0418">Kinase</keyword>
<keyword id="KW-0547">Nucleotide-binding</keyword>
<keyword id="KW-0597">Phosphoprotein</keyword>
<keyword id="KW-1185">Reference proteome</keyword>
<keyword id="KW-0723">Serine/threonine-protein kinase</keyword>
<keyword id="KW-0346">Stress response</keyword>
<keyword id="KW-0808">Transferase</keyword>
<accession>Q95ZQ4</accession>
<accession>Q22068</accession>
<accession>Q86FL6</accession>
<evidence type="ECO:0000255" key="1">
    <source>
        <dbReference type="PROSITE-ProRule" id="PRU00159"/>
    </source>
</evidence>
<evidence type="ECO:0000255" key="2">
    <source>
        <dbReference type="PROSITE-ProRule" id="PRU10027"/>
    </source>
</evidence>
<evidence type="ECO:0000256" key="3">
    <source>
        <dbReference type="SAM" id="MobiDB-lite"/>
    </source>
</evidence>
<evidence type="ECO:0000269" key="4">
    <source>
    </source>
</evidence>
<evidence type="ECO:0000269" key="5">
    <source>
    </source>
</evidence>
<evidence type="ECO:0000269" key="6">
    <source>
    </source>
</evidence>
<evidence type="ECO:0000269" key="7">
    <source>
    </source>
</evidence>
<evidence type="ECO:0000269" key="8">
    <source>
    </source>
</evidence>
<evidence type="ECO:0000269" key="9">
    <source>
    </source>
</evidence>
<evidence type="ECO:0000269" key="10">
    <source>
    </source>
</evidence>
<evidence type="ECO:0000269" key="11">
    <source>
    </source>
</evidence>
<evidence type="ECO:0000269" key="12">
    <source>
    </source>
</evidence>
<evidence type="ECO:0000305" key="13"/>
<evidence type="ECO:0000312" key="14">
    <source>
        <dbReference type="EMBL" id="AAR06928.1"/>
    </source>
</evidence>
<evidence type="ECO:0000312" key="15">
    <source>
        <dbReference type="WormBase" id="T01C8.1a"/>
    </source>
</evidence>
<evidence type="ECO:0000312" key="16">
    <source>
        <dbReference type="WormBase" id="T01C8.1b"/>
    </source>
</evidence>
<evidence type="ECO:0000312" key="17">
    <source>
        <dbReference type="WormBase" id="T01C8.1c"/>
    </source>
</evidence>
<feature type="chain" id="PRO_0000085599" description="5'-AMP-activated protein kinase catalytic subunit alpha-2">
    <location>
        <begin position="1"/>
        <end position="626"/>
    </location>
</feature>
<feature type="domain" description="Protein kinase" evidence="1">
    <location>
        <begin position="87"/>
        <end position="339"/>
    </location>
</feature>
<feature type="region of interest" description="Disordered" evidence="3">
    <location>
        <begin position="1"/>
        <end position="77"/>
    </location>
</feature>
<feature type="region of interest" description="Disordered" evidence="3">
    <location>
        <begin position="541"/>
        <end position="568"/>
    </location>
</feature>
<feature type="compositionally biased region" description="Basic and acidic residues" evidence="3">
    <location>
        <begin position="1"/>
        <end position="24"/>
    </location>
</feature>
<feature type="compositionally biased region" description="Basic residues" evidence="3">
    <location>
        <begin position="38"/>
        <end position="49"/>
    </location>
</feature>
<feature type="compositionally biased region" description="Polar residues" evidence="3">
    <location>
        <begin position="58"/>
        <end position="77"/>
    </location>
</feature>
<feature type="compositionally biased region" description="Low complexity" evidence="3">
    <location>
        <begin position="542"/>
        <end position="555"/>
    </location>
</feature>
<feature type="active site" description="Proton acceptor" evidence="1 2">
    <location>
        <position position="210"/>
    </location>
</feature>
<feature type="binding site" evidence="1">
    <location>
        <begin position="93"/>
        <end position="101"/>
    </location>
    <ligand>
        <name>ATP</name>
        <dbReference type="ChEBI" id="CHEBI:30616"/>
    </ligand>
</feature>
<feature type="binding site" evidence="1">
    <location>
        <position position="116"/>
    </location>
    <ligand>
        <name>ATP</name>
        <dbReference type="ChEBI" id="CHEBI:30616"/>
    </ligand>
</feature>
<feature type="modified residue" description="Phosphothreonine; by par-4" evidence="4 6 8">
    <location>
        <position position="243"/>
    </location>
</feature>
<feature type="splice variant" id="VSP_051940" description="In isoform c." evidence="13">
    <location>
        <begin position="1"/>
        <end position="62"/>
    </location>
</feature>
<feature type="splice variant" id="VSP_051941" description="In isoform a and isoform c." evidence="13">
    <location>
        <begin position="370"/>
        <end position="371"/>
    </location>
</feature>
<comment type="function">
    <text evidence="4 5 6 9 10 11 12">Acts as a sensor that couples lifespan to information about energy levels and insulin-like signals (PubMed:15574588). Role in motility and response to oxidative stress (PubMed:18408008, PubMed:24763318). Involved in the establishment of germline stem cell (GSC) quiescence during dauer development (PubMed:15574588, PubMed:20110331). Plays a role in axon regrowth after axotomy in PLM neurons (PubMed:24431434). Plays a role in the maintenance of glycogen stores which are necessary for resistance to hyperosmotic stress (PubMed:26439621). Plays a role in the regulation of flp-7 secretion from ASI neurons (PubMed:28128367). Keeps the CREB-regulated transcription coactivator 1 homolog crtc-1 inactive which in turn inhibits flp-7 secretion (PubMed:28128367). Following serotonin signaling, derepresses crtc-1 which stimulates flp-7 secretion and subsequent body fat loss (PubMed:28128367).</text>
</comment>
<comment type="catalytic activity">
    <reaction>
        <text>L-seryl-[protein] + ATP = O-phospho-L-seryl-[protein] + ADP + H(+)</text>
        <dbReference type="Rhea" id="RHEA:17989"/>
        <dbReference type="Rhea" id="RHEA-COMP:9863"/>
        <dbReference type="Rhea" id="RHEA-COMP:11604"/>
        <dbReference type="ChEBI" id="CHEBI:15378"/>
        <dbReference type="ChEBI" id="CHEBI:29999"/>
        <dbReference type="ChEBI" id="CHEBI:30616"/>
        <dbReference type="ChEBI" id="CHEBI:83421"/>
        <dbReference type="ChEBI" id="CHEBI:456216"/>
        <dbReference type="EC" id="2.7.11.1"/>
    </reaction>
</comment>
<comment type="catalytic activity">
    <reaction>
        <text>L-threonyl-[protein] + ATP = O-phospho-L-threonyl-[protein] + ADP + H(+)</text>
        <dbReference type="Rhea" id="RHEA:46608"/>
        <dbReference type="Rhea" id="RHEA-COMP:11060"/>
        <dbReference type="Rhea" id="RHEA-COMP:11605"/>
        <dbReference type="ChEBI" id="CHEBI:15378"/>
        <dbReference type="ChEBI" id="CHEBI:30013"/>
        <dbReference type="ChEBI" id="CHEBI:30616"/>
        <dbReference type="ChEBI" id="CHEBI:61977"/>
        <dbReference type="ChEBI" id="CHEBI:456216"/>
        <dbReference type="EC" id="2.7.11.1"/>
    </reaction>
</comment>
<comment type="activity regulation">
    <text evidence="4">Activated by phosphorylation.</text>
</comment>
<comment type="subunit">
    <text evidence="7">Tetramer, composed of 2 regulatory (R) and 2 catalytic (C) subunits. In the presence of cAMP it dissociates into 2 active monomeric C subunits and an R dimer that binds four cAMP molecules.</text>
</comment>
<comment type="interaction">
    <interactant intactId="EBI-326514">
        <id>Q95ZQ4</id>
    </interactant>
    <interactant intactId="EBI-2417663">
        <id>Q9NAH7</id>
        <label>aakb-2</label>
    </interactant>
    <organismsDiffer>false</organismsDiffer>
    <experiments>4</experiments>
</comment>
<comment type="alternative products">
    <event type="alternative splicing"/>
    <isoform>
        <id>Q95ZQ4-1</id>
        <name evidence="16">b</name>
        <sequence type="displayed"/>
    </isoform>
    <isoform>
        <id>Q95ZQ4-2</id>
        <name evidence="15">a</name>
        <sequence type="described" ref="VSP_051941"/>
    </isoform>
    <isoform>
        <id>Q95ZQ4-3</id>
        <name evidence="17">c</name>
        <sequence type="described" ref="VSP_051940 VSP_051941"/>
    </isoform>
</comment>
<comment type="tissue specificity">
    <text evidence="5">Expressed in the pharynx, the ventral cord, neurons including the hermaphrodite-specific neuron, body wall muscles, the vulva, the excretory canal, and weakly in the intestine.</text>
</comment>
<comment type="PTM">
    <text evidence="4 6 8">Phosphorylated on Thr-243 in response to oxidative stress and during dauer development (PubMed:24385923). Phosphorylation at Thr-243 is increased in response to sodium azide or the AMP analog AICAR (5-amino-1-(5-phospho-beta-D-ribosyl)imidazole-4-carboxamide) (PubMed:24385923).</text>
</comment>
<comment type="disruption phenotype">
    <text evidence="4 5 11">Shortened life-span (PubMed:15574588, PubMed:18408008). Temperature-dependent hypersensitivity to stress, slow body bending, abnormal modulation of head oscillation (PubMed:15574588, PubMed:18408008). Reduced survival following oxidative stress induced by the superoxide paraquat (PubMed:24763318). Reduced survival as a result of hyperosmotic stress induced by NaCl (PubMed:26439621). Double knockout with aak-1 results in reduced glycogen accumulation (PubMed:26439621).</text>
</comment>
<comment type="similarity">
    <text evidence="13">Belongs to the protein kinase superfamily. CAMK Ser/Thr protein kinase family. SNF1 subfamily.</text>
</comment>
<gene>
    <name evidence="16" type="primary">aak-2</name>
    <name evidence="16" type="ORF">T01C8.1</name>
</gene>
<sequence>MFSHQDRDRDRKEDGGGDGTEMKSKSRSQPSGLNRVKNLSRKLSAKSRKERKDRDSTDNSSKMSSPGGETSTKQQQELKAQIKIGHYILKETLGVGTFGKVKVGIHETTQYKVAVKILNRQKIKSLDVVGKIRREIQNLSLFRHPHIIRLYQVISTPSDIFMIMEHVSGGELFDYIVKHGRLKTAEARRFFQQIISGVDYCHRHMVVHRDLKPENLLLDEQNNVKIADFGLSNIMTDGDFLRTSCGSPNYAAPEVISGKLYAGPEVDVWSCGVILYALLCGTLPFDDEHVPSLFRKIKSGVFPTPDFLERPIVNLLHHMLCVDPMKRATIKDVIAHEWFQKDLPNYLFPPINESEASIVDIEAVREVTEFQRYHVAEEEVTSALLGDDPHHHLSIAYNLIVDNKRIADETAKLSIEEFYQVTPNKGPGPVHRHPERIAASVSSKITPTLDNTEASGANRNKRAKWHLGIRSQSRPEDIMFEVFRAMKQLDMEWKVLNPYHVIVRRKPDAPAADPPKMSLQLYQVDQRSYLLDFKSLADEESGSASASSSRHASMSMPQKPAGIRGTRTSSMPQAMSMEASIEKMEVHDFSDMSCDVTPPPSPGGAKLSQTMQFFEICAALIGTLAR</sequence>
<reference evidence="13 14" key="1">
    <citation type="journal article" date="2004" name="Genes Dev.">
        <title>The AMP-activated protein kinase AAK-2 links energy levels and insulin-like signals to lifespan in C. elegans.</title>
        <authorList>
            <person name="Apfeld J."/>
            <person name="O'Connor G."/>
            <person name="McDonagh T."/>
            <person name="DiStefano P.S."/>
            <person name="Curtis R."/>
        </authorList>
    </citation>
    <scope>NUCLEOTIDE SEQUENCE [MRNA] (ISOFORM A)</scope>
    <scope>FUNCTION</scope>
    <scope>ACTIVITY REGULATION</scope>
    <scope>DISRUPTION PHENOTYPE</scope>
    <scope>PHOSPHORYLATION AT THR-243</scope>
</reference>
<reference key="2">
    <citation type="journal article" date="2005" name="Genes Dev.">
        <authorList>
            <person name="Apfeld J."/>
            <person name="O'Connor G."/>
            <person name="McDonagh T."/>
            <person name="DiStefano P.S."/>
            <person name="Curtis R."/>
        </authorList>
    </citation>
    <scope>ERRATUM OF PUBMED:15574588</scope>
</reference>
<reference key="3">
    <citation type="journal article" date="2005" name="Genes Dev.">
        <authorList>
            <person name="Apfeld J."/>
            <person name="O'Connor G."/>
            <person name="McDonagh T."/>
            <person name="DiStefano P.S."/>
            <person name="Curtis R."/>
        </authorList>
    </citation>
    <scope>ERRATUM OF PUBMED:15574588</scope>
</reference>
<reference key="4">
    <citation type="journal article" date="1998" name="Science">
        <title>Genome sequence of the nematode C. elegans: a platform for investigating biology.</title>
        <authorList>
            <consortium name="The C. elegans sequencing consortium"/>
        </authorList>
    </citation>
    <scope>NUCLEOTIDE SEQUENCE [LARGE SCALE GENOMIC DNA]</scope>
    <source>
        <strain>Bristol N2</strain>
    </source>
</reference>
<reference key="5">
    <citation type="journal article" date="1990" name="J. Biol. Chem.">
        <title>Cloning, structure, and expression of the gene for a novel regulatory subunit of cAMP-dependent protein kinase in Caenorhabditis elegans.</title>
        <authorList>
            <person name="Lu X."/>
            <person name="Gross R.E."/>
            <person name="Bagchi S."/>
            <person name="Rubin C.S."/>
        </authorList>
    </citation>
    <scope>IDENTIFICATION IN AMPK COMPLEX</scope>
</reference>
<reference key="6">
    <citation type="journal article" date="2008" name="J. Biol. Chem.">
        <title>The Caenorhabditis elegans AMP-activated protein kinase AAK-2 is phosphorylated by LKB1 and is required for resistance to oxidative stress and for normal motility and foraging behavior.</title>
        <authorList>
            <person name="Lee H."/>
            <person name="Cho J.S."/>
            <person name="Lambacher N."/>
            <person name="Lee J."/>
            <person name="Lee S.J."/>
            <person name="Lee T.H."/>
            <person name="Gartner A."/>
            <person name="Koo H.S."/>
        </authorList>
    </citation>
    <scope>FUNCTION</scope>
    <scope>TISSUE SPECIFICITY</scope>
    <scope>DISRUPTION PHENOTYPE</scope>
</reference>
<reference key="7">
    <citation type="journal article" date="2010" name="Development">
        <title>Differential requirements for STRAD in LKB1-dependent functions in C. elegans.</title>
        <authorList>
            <person name="Narbonne P."/>
            <person name="Hyenne V."/>
            <person name="Li S."/>
            <person name="Labbe J.C."/>
            <person name="Roy R."/>
        </authorList>
    </citation>
    <scope>FUNCTION</scope>
    <scope>PHOSPHORYLATION AT THR-243</scope>
</reference>
<reference key="8">
    <citation type="journal article" date="2013" name="PLoS Genet.">
        <title>TATN-1 mutations reveal a novel role for tyrosine as a metabolic signal that influences developmental decisions and longevity in Caenorhabditis elegans.</title>
        <authorList>
            <person name="Ferguson A.A."/>
            <person name="Roy S."/>
            <person name="Kormanik K.N."/>
            <person name="Kim Y."/>
            <person name="Dumas K.J."/>
            <person name="Ritov V.B."/>
            <person name="Matern D."/>
            <person name="Hu P.J."/>
            <person name="Fisher A.L."/>
        </authorList>
    </citation>
    <scope>PHOSPHORYLATION AT THR-243</scope>
</reference>
<reference key="9">
    <citation type="journal article" date="2014" name="J. Neurosci.">
        <title>S6 kinase inhibits intrinsic axon regeneration capacity via AMP kinase in Caenorhabditis elegans.</title>
        <authorList>
            <person name="Hubert T."/>
            <person name="Wu Z."/>
            <person name="Chisholm A.D."/>
            <person name="Jin Y."/>
        </authorList>
    </citation>
    <scope>FUNCTION</scope>
</reference>
<reference key="10">
    <citation type="journal article" date="2014" name="PLoS Genet.">
        <title>Folliculin regulates ampk-dependent autophagy and metabolic stress survival.</title>
        <authorList>
            <person name="Possik E."/>
            <person name="Jalali Z."/>
            <person name="Nouet Y."/>
            <person name="Yan M."/>
            <person name="Gingras M.C."/>
            <person name="Schmeisser K."/>
            <person name="Panaite L."/>
            <person name="Dupuy F."/>
            <person name="Kharitidi D."/>
            <person name="Chotard L."/>
            <person name="Jones R.G."/>
            <person name="Hall D.H."/>
            <person name="Pause A."/>
        </authorList>
    </citation>
    <scope>FUNCTION</scope>
    <scope>DISRUPTION PHENOTYPE</scope>
</reference>
<reference key="11">
    <citation type="journal article" date="2015" name="PLoS Genet.">
        <title>FLCN and AMPK Confer Resistance to Hyperosmotic Stress via Remodeling of Glycogen Stores.</title>
        <authorList>
            <person name="Possik E."/>
            <person name="Ajisebutu A."/>
            <person name="Manteghi S."/>
            <person name="Gingras M.C."/>
            <person name="Vijayaraghavan T."/>
            <person name="Flamand M."/>
            <person name="Coull B."/>
            <person name="Schmeisser K."/>
            <person name="Duchaine T."/>
            <person name="van Steensel M."/>
            <person name="Hall D.H."/>
            <person name="Pause A."/>
        </authorList>
    </citation>
    <scope>FUNCTION</scope>
    <scope>DISRUPTION PHENOTYPE</scope>
</reference>
<reference key="12">
    <citation type="journal article" date="2017" name="Nat. Commun.">
        <title>A tachykinin-like neuroendocrine signalling axis couples central serotonin action and nutrient sensing with peripheral lipid metabolism.</title>
        <authorList>
            <person name="Palamiuc L."/>
            <person name="Noble T."/>
            <person name="Witham E."/>
            <person name="Ratanpal H."/>
            <person name="Vaughan M."/>
            <person name="Srinivasan S."/>
        </authorList>
    </citation>
    <scope>FUNCTION</scope>
</reference>
<name>AAPK2_CAEEL</name>
<dbReference type="EC" id="2.7.11.1"/>
<dbReference type="EMBL" id="AY347273">
    <property type="protein sequence ID" value="AAR06928.1"/>
    <property type="molecule type" value="mRNA"/>
</dbReference>
<dbReference type="EMBL" id="BX284606">
    <property type="protein sequence ID" value="CCD68833.1"/>
    <property type="molecule type" value="Genomic_DNA"/>
</dbReference>
<dbReference type="EMBL" id="BX284606">
    <property type="protein sequence ID" value="CCD68834.1"/>
    <property type="molecule type" value="Genomic_DNA"/>
</dbReference>
<dbReference type="EMBL" id="BX284606">
    <property type="protein sequence ID" value="CCD68835.1"/>
    <property type="molecule type" value="Genomic_DNA"/>
</dbReference>
<dbReference type="PIR" id="T29858">
    <property type="entry name" value="T29858"/>
</dbReference>
<dbReference type="RefSeq" id="NP_001024868.1">
    <molecule id="Q95ZQ4-3"/>
    <property type="nucleotide sequence ID" value="NM_001029697.6"/>
</dbReference>
<dbReference type="RefSeq" id="NP_510710.2">
    <molecule id="Q95ZQ4-1"/>
    <property type="nucleotide sequence ID" value="NM_078309.4"/>
</dbReference>
<dbReference type="RefSeq" id="NP_510711.2">
    <molecule id="Q95ZQ4-2"/>
    <property type="nucleotide sequence ID" value="NM_078310.5"/>
</dbReference>
<dbReference type="SMR" id="Q95ZQ4"/>
<dbReference type="BioGRID" id="46610">
    <property type="interactions" value="26"/>
</dbReference>
<dbReference type="DIP" id="DIP-25170N"/>
<dbReference type="FunCoup" id="Q95ZQ4">
    <property type="interactions" value="3237"/>
</dbReference>
<dbReference type="IntAct" id="Q95ZQ4">
    <property type="interactions" value="7"/>
</dbReference>
<dbReference type="STRING" id="6239.T01C8.1b.1"/>
<dbReference type="iPTMnet" id="Q95ZQ4"/>
<dbReference type="PaxDb" id="6239-T01C8.1b"/>
<dbReference type="PeptideAtlas" id="Q95ZQ4"/>
<dbReference type="EnsemblMetazoa" id="T01C8.1a.1">
    <molecule id="Q95ZQ4-2"/>
    <property type="protein sequence ID" value="T01C8.1a.1"/>
    <property type="gene ID" value="WBGene00020142"/>
</dbReference>
<dbReference type="EnsemblMetazoa" id="T01C8.1b.1">
    <molecule id="Q95ZQ4-1"/>
    <property type="protein sequence ID" value="T01C8.1b.1"/>
    <property type="gene ID" value="WBGene00020142"/>
</dbReference>
<dbReference type="EnsemblMetazoa" id="T01C8.1c.1">
    <molecule id="Q95ZQ4-3"/>
    <property type="protein sequence ID" value="T01C8.1c.1"/>
    <property type="gene ID" value="WBGene00020142"/>
</dbReference>
<dbReference type="GeneID" id="181727"/>
<dbReference type="KEGG" id="cel:CELE_T01C8.1"/>
<dbReference type="UCSC" id="T01C8.1c.1">
    <molecule id="Q95ZQ4-1"/>
    <property type="organism name" value="c. elegans"/>
</dbReference>
<dbReference type="AGR" id="WB:WBGene00020142"/>
<dbReference type="CTD" id="181727"/>
<dbReference type="WormBase" id="T01C8.1a">
    <molecule id="Q95ZQ4-2"/>
    <property type="protein sequence ID" value="CE31222"/>
    <property type="gene ID" value="WBGene00020142"/>
    <property type="gene designation" value="aak-2"/>
</dbReference>
<dbReference type="WormBase" id="T01C8.1b">
    <molecule id="Q95ZQ4-1"/>
    <property type="protein sequence ID" value="CE31223"/>
    <property type="gene ID" value="WBGene00020142"/>
    <property type="gene designation" value="aak-2"/>
</dbReference>
<dbReference type="WormBase" id="T01C8.1c">
    <molecule id="Q95ZQ4-3"/>
    <property type="protein sequence ID" value="CE07458"/>
    <property type="gene ID" value="WBGene00020142"/>
    <property type="gene designation" value="aak-2"/>
</dbReference>
<dbReference type="eggNOG" id="KOG0583">
    <property type="taxonomic scope" value="Eukaryota"/>
</dbReference>
<dbReference type="GeneTree" id="ENSGT00940000167424"/>
<dbReference type="InParanoid" id="Q95ZQ4"/>
<dbReference type="OMA" id="GSWLKMA"/>
<dbReference type="OrthoDB" id="193931at2759"/>
<dbReference type="PhylomeDB" id="Q95ZQ4"/>
<dbReference type="Reactome" id="R-CEL-1632852">
    <property type="pathway name" value="Macroautophagy"/>
</dbReference>
<dbReference type="Reactome" id="R-CEL-163680">
    <property type="pathway name" value="AMPK inhibits chREBP transcriptional activation activity"/>
</dbReference>
<dbReference type="Reactome" id="R-CEL-200425">
    <property type="pathway name" value="Carnitine shuttle"/>
</dbReference>
<dbReference type="Reactome" id="R-CEL-380972">
    <property type="pathway name" value="Energy dependent regulation of mTOR by LKB1-AMPK"/>
</dbReference>
<dbReference type="Reactome" id="R-CEL-5628897">
    <property type="pathway name" value="TP53 Regulates Metabolic Genes"/>
</dbReference>
<dbReference type="Reactome" id="R-CEL-9759194">
    <property type="pathway name" value="Nuclear events mediated by NFE2L2"/>
</dbReference>
<dbReference type="PRO" id="PR:Q95ZQ4"/>
<dbReference type="Proteomes" id="UP000001940">
    <property type="component" value="Chromosome X"/>
</dbReference>
<dbReference type="Bgee" id="WBGene00020142">
    <property type="expression patterns" value="Expressed in pharyngeal muscle cell (C elegans) and 4 other cell types or tissues"/>
</dbReference>
<dbReference type="GO" id="GO:0030424">
    <property type="term" value="C:axon"/>
    <property type="evidence" value="ECO:0000314"/>
    <property type="project" value="WormBase"/>
</dbReference>
<dbReference type="GO" id="GO:0005737">
    <property type="term" value="C:cytoplasm"/>
    <property type="evidence" value="ECO:0000314"/>
    <property type="project" value="WormBase"/>
</dbReference>
<dbReference type="GO" id="GO:0043025">
    <property type="term" value="C:neuronal cell body"/>
    <property type="evidence" value="ECO:0000314"/>
    <property type="project" value="WormBase"/>
</dbReference>
<dbReference type="GO" id="GO:0031588">
    <property type="term" value="C:nucleotide-activated protein kinase complex"/>
    <property type="evidence" value="ECO:0000318"/>
    <property type="project" value="GO_Central"/>
</dbReference>
<dbReference type="GO" id="GO:0005634">
    <property type="term" value="C:nucleus"/>
    <property type="evidence" value="ECO:0000318"/>
    <property type="project" value="GO_Central"/>
</dbReference>
<dbReference type="GO" id="GO:0004679">
    <property type="term" value="F:AMP-activated protein kinase activity"/>
    <property type="evidence" value="ECO:0000314"/>
    <property type="project" value="WormBase"/>
</dbReference>
<dbReference type="GO" id="GO:0005524">
    <property type="term" value="F:ATP binding"/>
    <property type="evidence" value="ECO:0007669"/>
    <property type="project" value="UniProtKB-KW"/>
</dbReference>
<dbReference type="GO" id="GO:0106310">
    <property type="term" value="F:protein serine kinase activity"/>
    <property type="evidence" value="ECO:0007669"/>
    <property type="project" value="RHEA"/>
</dbReference>
<dbReference type="GO" id="GO:0004674">
    <property type="term" value="F:protein serine/threonine kinase activity"/>
    <property type="evidence" value="ECO:0000318"/>
    <property type="project" value="GO_Central"/>
</dbReference>
<dbReference type="GO" id="GO:0042149">
    <property type="term" value="P:cellular response to glucose starvation"/>
    <property type="evidence" value="ECO:0000318"/>
    <property type="project" value="GO_Central"/>
</dbReference>
<dbReference type="GO" id="GO:0008340">
    <property type="term" value="P:determination of adult lifespan"/>
    <property type="evidence" value="ECO:0000315"/>
    <property type="project" value="WormBase"/>
</dbReference>
<dbReference type="GO" id="GO:0050709">
    <property type="term" value="P:negative regulation of protein secretion"/>
    <property type="evidence" value="ECO:0000315"/>
    <property type="project" value="UniProtKB"/>
</dbReference>
<dbReference type="GO" id="GO:1904262">
    <property type="term" value="P:negative regulation of TORC1 signaling"/>
    <property type="evidence" value="ECO:0000318"/>
    <property type="project" value="GO_Central"/>
</dbReference>
<dbReference type="GO" id="GO:0043050">
    <property type="term" value="P:nematode pharyngeal pumping"/>
    <property type="evidence" value="ECO:0000315"/>
    <property type="project" value="UniProtKB"/>
</dbReference>
<dbReference type="GO" id="GO:0010508">
    <property type="term" value="P:positive regulation of autophagy"/>
    <property type="evidence" value="ECO:0000318"/>
    <property type="project" value="GO_Central"/>
</dbReference>
<dbReference type="GO" id="GO:0061066">
    <property type="term" value="P:positive regulation of dauer larval development"/>
    <property type="evidence" value="ECO:0000316"/>
    <property type="project" value="WormBase"/>
</dbReference>
<dbReference type="GO" id="GO:0050714">
    <property type="term" value="P:positive regulation of protein secretion"/>
    <property type="evidence" value="ECO:0000315"/>
    <property type="project" value="UniProtKB"/>
</dbReference>
<dbReference type="GO" id="GO:1990044">
    <property type="term" value="P:protein localization to lipid droplet"/>
    <property type="evidence" value="ECO:0000318"/>
    <property type="project" value="GO_Central"/>
</dbReference>
<dbReference type="GO" id="GO:0007210">
    <property type="term" value="P:serotonin receptor signaling pathway"/>
    <property type="evidence" value="ECO:0000315"/>
    <property type="project" value="UniProtKB"/>
</dbReference>
<dbReference type="CDD" id="cd12122">
    <property type="entry name" value="AMPKA_C"/>
    <property type="match status" value="1"/>
</dbReference>
<dbReference type="CDD" id="cd14079">
    <property type="entry name" value="STKc_AMPK_alpha"/>
    <property type="match status" value="1"/>
</dbReference>
<dbReference type="CDD" id="cd14336">
    <property type="entry name" value="UBA_AID_AMPKalpha"/>
    <property type="match status" value="1"/>
</dbReference>
<dbReference type="FunFam" id="1.10.510.10:FF:000079">
    <property type="entry name" value="Non-specific serine/threonine protein kinase"/>
    <property type="match status" value="1"/>
</dbReference>
<dbReference type="FunFam" id="1.10.8.10:FF:000055">
    <property type="entry name" value="Non-specific serine/threonine protein kinase"/>
    <property type="match status" value="1"/>
</dbReference>
<dbReference type="FunFam" id="3.30.200.20:FF:000136">
    <property type="entry name" value="Non-specific serine/threonine protein kinase"/>
    <property type="match status" value="1"/>
</dbReference>
<dbReference type="Gene3D" id="1.10.8.10">
    <property type="entry name" value="DNA helicase RuvA subunit, C-terminal domain"/>
    <property type="match status" value="1"/>
</dbReference>
<dbReference type="Gene3D" id="3.30.310.80">
    <property type="entry name" value="Kinase associated domain 1, KA1"/>
    <property type="match status" value="1"/>
</dbReference>
<dbReference type="Gene3D" id="3.30.200.20">
    <property type="entry name" value="Phosphorylase Kinase, domain 1"/>
    <property type="match status" value="1"/>
</dbReference>
<dbReference type="Gene3D" id="1.10.510.10">
    <property type="entry name" value="Transferase(Phosphotransferase) domain 1"/>
    <property type="match status" value="1"/>
</dbReference>
<dbReference type="InterPro" id="IPR032270">
    <property type="entry name" value="AMPK_C"/>
</dbReference>
<dbReference type="InterPro" id="IPR028375">
    <property type="entry name" value="KA1/Ssp2_C"/>
</dbReference>
<dbReference type="InterPro" id="IPR011009">
    <property type="entry name" value="Kinase-like_dom_sf"/>
</dbReference>
<dbReference type="InterPro" id="IPR049020">
    <property type="entry name" value="PRKAA1/2_AID"/>
</dbReference>
<dbReference type="InterPro" id="IPR000719">
    <property type="entry name" value="Prot_kinase_dom"/>
</dbReference>
<dbReference type="InterPro" id="IPR017441">
    <property type="entry name" value="Protein_kinase_ATP_BS"/>
</dbReference>
<dbReference type="InterPro" id="IPR008271">
    <property type="entry name" value="Ser/Thr_kinase_AS"/>
</dbReference>
<dbReference type="PANTHER" id="PTHR24346">
    <property type="entry name" value="MAP/MICROTUBULE AFFINITY-REGULATING KINASE"/>
    <property type="match status" value="1"/>
</dbReference>
<dbReference type="PANTHER" id="PTHR24346:SF110">
    <property type="entry name" value="NON-SPECIFIC SERINE_THREONINE PROTEIN KINASE"/>
    <property type="match status" value="1"/>
</dbReference>
<dbReference type="Pfam" id="PF16579">
    <property type="entry name" value="AdenylateSensor"/>
    <property type="match status" value="1"/>
</dbReference>
<dbReference type="Pfam" id="PF21147">
    <property type="entry name" value="AMPK_alpha_AID"/>
    <property type="match status" value="1"/>
</dbReference>
<dbReference type="Pfam" id="PF00069">
    <property type="entry name" value="Pkinase"/>
    <property type="match status" value="1"/>
</dbReference>
<dbReference type="SMART" id="SM00220">
    <property type="entry name" value="S_TKc"/>
    <property type="match status" value="1"/>
</dbReference>
<dbReference type="SUPFAM" id="SSF103243">
    <property type="entry name" value="KA1-like"/>
    <property type="match status" value="1"/>
</dbReference>
<dbReference type="SUPFAM" id="SSF56112">
    <property type="entry name" value="Protein kinase-like (PK-like)"/>
    <property type="match status" value="1"/>
</dbReference>
<dbReference type="PROSITE" id="PS00107">
    <property type="entry name" value="PROTEIN_KINASE_ATP"/>
    <property type="match status" value="1"/>
</dbReference>
<dbReference type="PROSITE" id="PS50011">
    <property type="entry name" value="PROTEIN_KINASE_DOM"/>
    <property type="match status" value="1"/>
</dbReference>
<dbReference type="PROSITE" id="PS00108">
    <property type="entry name" value="PROTEIN_KINASE_ST"/>
    <property type="match status" value="1"/>
</dbReference>
<proteinExistence type="evidence at protein level"/>